<name>IF1_NITEU</name>
<gene>
    <name evidence="1" type="primary">infA</name>
    <name type="ordered locus">NE0422</name>
</gene>
<proteinExistence type="inferred from homology"/>
<keyword id="KW-0963">Cytoplasm</keyword>
<keyword id="KW-0396">Initiation factor</keyword>
<keyword id="KW-0648">Protein biosynthesis</keyword>
<keyword id="KW-1185">Reference proteome</keyword>
<keyword id="KW-0694">RNA-binding</keyword>
<keyword id="KW-0699">rRNA-binding</keyword>
<organism>
    <name type="scientific">Nitrosomonas europaea (strain ATCC 19718 / CIP 103999 / KCTC 2705 / NBRC 14298)</name>
    <dbReference type="NCBI Taxonomy" id="228410"/>
    <lineage>
        <taxon>Bacteria</taxon>
        <taxon>Pseudomonadati</taxon>
        <taxon>Pseudomonadota</taxon>
        <taxon>Betaproteobacteria</taxon>
        <taxon>Nitrosomonadales</taxon>
        <taxon>Nitrosomonadaceae</taxon>
        <taxon>Nitrosomonas</taxon>
    </lineage>
</organism>
<dbReference type="EMBL" id="AL954747">
    <property type="protein sequence ID" value="CAD84333.1"/>
    <property type="molecule type" value="Genomic_DNA"/>
</dbReference>
<dbReference type="RefSeq" id="WP_011111057.1">
    <property type="nucleotide sequence ID" value="NC_004757.1"/>
</dbReference>
<dbReference type="SMR" id="Q820Q7"/>
<dbReference type="STRING" id="228410.NE0422"/>
<dbReference type="GeneID" id="87103629"/>
<dbReference type="KEGG" id="neu:NE0422"/>
<dbReference type="eggNOG" id="COG0361">
    <property type="taxonomic scope" value="Bacteria"/>
</dbReference>
<dbReference type="HOGENOM" id="CLU_151267_1_0_4"/>
<dbReference type="OrthoDB" id="9803250at2"/>
<dbReference type="PhylomeDB" id="Q820Q7"/>
<dbReference type="Proteomes" id="UP000001416">
    <property type="component" value="Chromosome"/>
</dbReference>
<dbReference type="GO" id="GO:0005829">
    <property type="term" value="C:cytosol"/>
    <property type="evidence" value="ECO:0007669"/>
    <property type="project" value="TreeGrafter"/>
</dbReference>
<dbReference type="GO" id="GO:0043022">
    <property type="term" value="F:ribosome binding"/>
    <property type="evidence" value="ECO:0007669"/>
    <property type="project" value="UniProtKB-UniRule"/>
</dbReference>
<dbReference type="GO" id="GO:0019843">
    <property type="term" value="F:rRNA binding"/>
    <property type="evidence" value="ECO:0007669"/>
    <property type="project" value="UniProtKB-UniRule"/>
</dbReference>
<dbReference type="GO" id="GO:0003743">
    <property type="term" value="F:translation initiation factor activity"/>
    <property type="evidence" value="ECO:0007669"/>
    <property type="project" value="UniProtKB-UniRule"/>
</dbReference>
<dbReference type="CDD" id="cd04451">
    <property type="entry name" value="S1_IF1"/>
    <property type="match status" value="1"/>
</dbReference>
<dbReference type="FunFam" id="2.40.50.140:FF:000002">
    <property type="entry name" value="Translation initiation factor IF-1"/>
    <property type="match status" value="1"/>
</dbReference>
<dbReference type="Gene3D" id="2.40.50.140">
    <property type="entry name" value="Nucleic acid-binding proteins"/>
    <property type="match status" value="1"/>
</dbReference>
<dbReference type="HAMAP" id="MF_00075">
    <property type="entry name" value="IF_1"/>
    <property type="match status" value="1"/>
</dbReference>
<dbReference type="InterPro" id="IPR012340">
    <property type="entry name" value="NA-bd_OB-fold"/>
</dbReference>
<dbReference type="InterPro" id="IPR006196">
    <property type="entry name" value="RNA-binding_domain_S1_IF1"/>
</dbReference>
<dbReference type="InterPro" id="IPR003029">
    <property type="entry name" value="S1_domain"/>
</dbReference>
<dbReference type="InterPro" id="IPR004368">
    <property type="entry name" value="TIF_IF1"/>
</dbReference>
<dbReference type="NCBIfam" id="TIGR00008">
    <property type="entry name" value="infA"/>
    <property type="match status" value="1"/>
</dbReference>
<dbReference type="PANTHER" id="PTHR33370">
    <property type="entry name" value="TRANSLATION INITIATION FACTOR IF-1, CHLOROPLASTIC"/>
    <property type="match status" value="1"/>
</dbReference>
<dbReference type="PANTHER" id="PTHR33370:SF1">
    <property type="entry name" value="TRANSLATION INITIATION FACTOR IF-1, CHLOROPLASTIC"/>
    <property type="match status" value="1"/>
</dbReference>
<dbReference type="Pfam" id="PF01176">
    <property type="entry name" value="eIF-1a"/>
    <property type="match status" value="1"/>
</dbReference>
<dbReference type="SMART" id="SM00316">
    <property type="entry name" value="S1"/>
    <property type="match status" value="1"/>
</dbReference>
<dbReference type="SUPFAM" id="SSF50249">
    <property type="entry name" value="Nucleic acid-binding proteins"/>
    <property type="match status" value="1"/>
</dbReference>
<dbReference type="PROSITE" id="PS50832">
    <property type="entry name" value="S1_IF1_TYPE"/>
    <property type="match status" value="1"/>
</dbReference>
<comment type="function">
    <text evidence="1">One of the essential components for the initiation of protein synthesis. Stabilizes the binding of IF-2 and IF-3 on the 30S subunit to which N-formylmethionyl-tRNA(fMet) subsequently binds. Helps modulate mRNA selection, yielding the 30S pre-initiation complex (PIC). Upon addition of the 50S ribosomal subunit IF-1, IF-2 and IF-3 are released leaving the mature 70S translation initiation complex.</text>
</comment>
<comment type="subunit">
    <text evidence="1">Component of the 30S ribosomal translation pre-initiation complex which assembles on the 30S ribosome in the order IF-2 and IF-3, IF-1 and N-formylmethionyl-tRNA(fMet); mRNA recruitment can occur at any time during PIC assembly.</text>
</comment>
<comment type="subcellular location">
    <subcellularLocation>
        <location evidence="1">Cytoplasm</location>
    </subcellularLocation>
</comment>
<comment type="similarity">
    <text evidence="1">Belongs to the IF-1 family.</text>
</comment>
<feature type="chain" id="PRO_0000095834" description="Translation initiation factor IF-1">
    <location>
        <begin position="1"/>
        <end position="72"/>
    </location>
</feature>
<feature type="domain" description="S1-like" evidence="1">
    <location>
        <begin position="1"/>
        <end position="72"/>
    </location>
</feature>
<accession>Q820Q7</accession>
<reference key="1">
    <citation type="journal article" date="2003" name="J. Bacteriol.">
        <title>Complete genome sequence of the ammonia-oxidizing bacterium and obligate chemolithoautotroph Nitrosomonas europaea.</title>
        <authorList>
            <person name="Chain P."/>
            <person name="Lamerdin J.E."/>
            <person name="Larimer F.W."/>
            <person name="Regala W."/>
            <person name="Lao V."/>
            <person name="Land M.L."/>
            <person name="Hauser L."/>
            <person name="Hooper A.B."/>
            <person name="Klotz M.G."/>
            <person name="Norton J."/>
            <person name="Sayavedra-Soto L.A."/>
            <person name="Arciero D.M."/>
            <person name="Hommes N.G."/>
            <person name="Whittaker M.M."/>
            <person name="Arp D.J."/>
        </authorList>
    </citation>
    <scope>NUCLEOTIDE SEQUENCE [LARGE SCALE GENOMIC DNA]</scope>
    <source>
        <strain>ATCC 19718 / CIP 103999 / KCTC 2705 / NBRC 14298</strain>
    </source>
</reference>
<protein>
    <recommendedName>
        <fullName evidence="1">Translation initiation factor IF-1</fullName>
    </recommendedName>
</protein>
<evidence type="ECO:0000255" key="1">
    <source>
        <dbReference type="HAMAP-Rule" id="MF_00075"/>
    </source>
</evidence>
<sequence>MAKEETIQMQGEVIETLPNATFRIKLENGHIVLGHISGKMRMNYIRILPGDKVTVDLTPYDLTRARITFRTK</sequence>